<feature type="chain" id="PRO_0000165096" description="Uncharacterized 5.6 kDa protein in Gp42-imm intergenic region">
    <location>
        <begin position="1"/>
        <end position="49"/>
    </location>
</feature>
<accession>P39488</accession>
<accession>D9IE76</accession>
<proteinExistence type="predicted"/>
<gene>
    <name type="primary">y02C</name>
    <name type="synonym">42.1</name>
    <name type="ORF">T4T045</name>
</gene>
<keyword id="KW-1185">Reference proteome</keyword>
<organism>
    <name type="scientific">Enterobacteria phage T4</name>
    <name type="common">Bacteriophage T4</name>
    <dbReference type="NCBI Taxonomy" id="10665"/>
    <lineage>
        <taxon>Viruses</taxon>
        <taxon>Duplodnaviria</taxon>
        <taxon>Heunggongvirae</taxon>
        <taxon>Uroviricota</taxon>
        <taxon>Caudoviricetes</taxon>
        <taxon>Straboviridae</taxon>
        <taxon>Tevenvirinae</taxon>
        <taxon>Tequatrovirus</taxon>
    </lineage>
</organism>
<protein>
    <recommendedName>
        <fullName>Uncharacterized 5.6 kDa protein in Gp42-imm intergenic region</fullName>
    </recommendedName>
</protein>
<reference key="1">
    <citation type="journal article" date="1988" name="Eur. J. Biochem.">
        <title>Deoxycytidylate hydroxymethylase gene of bacteriophage T4. Nucleotide sequence determination and over-expression of the gene.</title>
        <authorList>
            <person name="Lamm N."/>
            <person name="Wang Y."/>
            <person name="Mathews C.K."/>
            <person name="Rueger W."/>
        </authorList>
    </citation>
    <scope>NUCLEOTIDE SEQUENCE [GENOMIC DNA]</scope>
</reference>
<reference key="2">
    <citation type="journal article" date="2003" name="Microbiol. Mol. Biol. Rev.">
        <title>Bacteriophage T4 genome.</title>
        <authorList>
            <person name="Miller E.S."/>
            <person name="Kutter E."/>
            <person name="Mosig G."/>
            <person name="Arisaka F."/>
            <person name="Kunisawa T."/>
            <person name="Ruger W."/>
        </authorList>
    </citation>
    <scope>NUCLEOTIDE SEQUENCE [LARGE SCALE GENOMIC DNA]</scope>
</reference>
<reference key="3">
    <citation type="journal article" date="2010" name="Virol. J.">
        <title>Genomes of the T4-related bacteriophages as windows on microbial genome evolution.</title>
        <authorList>
            <person name="Petrov V.M."/>
            <person name="Ratnayaka S."/>
            <person name="Nolan J.M."/>
            <person name="Miller E.S."/>
            <person name="Karam J.D."/>
        </authorList>
    </citation>
    <scope>NUCLEOTIDE SEQUENCE [LARGE SCALE GENOMIC DNA]</scope>
</reference>
<name>Y02C_BPT4</name>
<sequence length="49" mass="5564">MKSKIIAALLLILMIIISIYYSVTVPLMIPTIILGWSLLLLQVKYECIN</sequence>
<organismHost>
    <name type="scientific">Escherichia coli</name>
    <dbReference type="NCBI Taxonomy" id="562"/>
</organismHost>
<dbReference type="EMBL" id="M37159">
    <property type="status" value="NOT_ANNOTATED_CDS"/>
    <property type="molecule type" value="Genomic_DNA"/>
</dbReference>
<dbReference type="EMBL" id="AF158101">
    <property type="status" value="NOT_ANNOTATED_CDS"/>
    <property type="molecule type" value="Genomic_DNA"/>
</dbReference>
<dbReference type="EMBL" id="HM137666">
    <property type="protein sequence ID" value="ADJ39762.1"/>
    <property type="molecule type" value="Genomic_DNA"/>
</dbReference>
<dbReference type="PIR" id="JS0544">
    <property type="entry name" value="JS0544"/>
</dbReference>
<dbReference type="SMR" id="P39488"/>
<dbReference type="Proteomes" id="UP000001092">
    <property type="component" value="Segment"/>
</dbReference>
<dbReference type="Proteomes" id="UP000009087">
    <property type="component" value="Segment"/>
</dbReference>